<evidence type="ECO:0000305" key="1"/>
<proteinExistence type="evidence at protein level"/>
<protein>
    <recommendedName>
        <fullName>Uncharacterized methyltransferase Rv3342</fullName>
        <ecNumber>2.1.1.-</ecNumber>
    </recommendedName>
</protein>
<gene>
    <name type="ordered locus">Rv3342</name>
    <name type="ORF">MTV016.42</name>
</gene>
<comment type="similarity">
    <text evidence="1">Belongs to the methyltransferase superfamily.</text>
</comment>
<organism>
    <name type="scientific">Mycobacterium tuberculosis (strain ATCC 25618 / H37Rv)</name>
    <dbReference type="NCBI Taxonomy" id="83332"/>
    <lineage>
        <taxon>Bacteria</taxon>
        <taxon>Bacillati</taxon>
        <taxon>Actinomycetota</taxon>
        <taxon>Actinomycetes</taxon>
        <taxon>Mycobacteriales</taxon>
        <taxon>Mycobacteriaceae</taxon>
        <taxon>Mycobacterium</taxon>
        <taxon>Mycobacterium tuberculosis complex</taxon>
    </lineage>
</organism>
<feature type="chain" id="PRO_0000204443" description="Uncharacterized methyltransferase Rv3342">
    <location>
        <begin position="1"/>
        <end position="243"/>
    </location>
</feature>
<keyword id="KW-0489">Methyltransferase</keyword>
<keyword id="KW-1185">Reference proteome</keyword>
<keyword id="KW-0808">Transferase</keyword>
<reference key="1">
    <citation type="journal article" date="1998" name="Nature">
        <title>Deciphering the biology of Mycobacterium tuberculosis from the complete genome sequence.</title>
        <authorList>
            <person name="Cole S.T."/>
            <person name="Brosch R."/>
            <person name="Parkhill J."/>
            <person name="Garnier T."/>
            <person name="Churcher C.M."/>
            <person name="Harris D.E."/>
            <person name="Gordon S.V."/>
            <person name="Eiglmeier K."/>
            <person name="Gas S."/>
            <person name="Barry C.E. III"/>
            <person name="Tekaia F."/>
            <person name="Badcock K."/>
            <person name="Basham D."/>
            <person name="Brown D."/>
            <person name="Chillingworth T."/>
            <person name="Connor R."/>
            <person name="Davies R.M."/>
            <person name="Devlin K."/>
            <person name="Feltwell T."/>
            <person name="Gentles S."/>
            <person name="Hamlin N."/>
            <person name="Holroyd S."/>
            <person name="Hornsby T."/>
            <person name="Jagels K."/>
            <person name="Krogh A."/>
            <person name="McLean J."/>
            <person name="Moule S."/>
            <person name="Murphy L.D."/>
            <person name="Oliver S."/>
            <person name="Osborne J."/>
            <person name="Quail M.A."/>
            <person name="Rajandream M.A."/>
            <person name="Rogers J."/>
            <person name="Rutter S."/>
            <person name="Seeger K."/>
            <person name="Skelton S."/>
            <person name="Squares S."/>
            <person name="Squares R."/>
            <person name="Sulston J.E."/>
            <person name="Taylor K."/>
            <person name="Whitehead S."/>
            <person name="Barrell B.G."/>
        </authorList>
    </citation>
    <scope>NUCLEOTIDE SEQUENCE [LARGE SCALE GENOMIC DNA]</scope>
    <source>
        <strain>ATCC 25618 / H37Rv</strain>
    </source>
</reference>
<reference key="2">
    <citation type="journal article" date="2011" name="Mol. Cell. Proteomics">
        <title>Proteogenomic analysis of Mycobacterium tuberculosis by high resolution mass spectrometry.</title>
        <authorList>
            <person name="Kelkar D.S."/>
            <person name="Kumar D."/>
            <person name="Kumar P."/>
            <person name="Balakrishnan L."/>
            <person name="Muthusamy B."/>
            <person name="Yadav A.K."/>
            <person name="Shrivastava P."/>
            <person name="Marimuthu A."/>
            <person name="Anand S."/>
            <person name="Sundaram H."/>
            <person name="Kingsbury R."/>
            <person name="Harsha H.C."/>
            <person name="Nair B."/>
            <person name="Prasad T.S."/>
            <person name="Chauhan D.S."/>
            <person name="Katoch K."/>
            <person name="Katoch V.M."/>
            <person name="Kumar P."/>
            <person name="Chaerkady R."/>
            <person name="Ramachandran S."/>
            <person name="Dash D."/>
            <person name="Pandey A."/>
        </authorList>
    </citation>
    <scope>IDENTIFICATION BY MASS SPECTROMETRY [LARGE SCALE ANALYSIS]</scope>
    <source>
        <strain>ATCC 25618 / H37Rv</strain>
    </source>
</reference>
<name>Y3342_MYCTU</name>
<dbReference type="EC" id="2.1.1.-"/>
<dbReference type="EMBL" id="AL123456">
    <property type="protein sequence ID" value="CCP46163.1"/>
    <property type="molecule type" value="Genomic_DNA"/>
</dbReference>
<dbReference type="PIR" id="E70846">
    <property type="entry name" value="E70846"/>
</dbReference>
<dbReference type="RefSeq" id="NP_217859.1">
    <property type="nucleotide sequence ID" value="NC_000962.3"/>
</dbReference>
<dbReference type="RefSeq" id="WP_003417461.1">
    <property type="nucleotide sequence ID" value="NZ_NVQJ01000051.1"/>
</dbReference>
<dbReference type="SMR" id="P9WK01"/>
<dbReference type="FunCoup" id="P9WK01">
    <property type="interactions" value="13"/>
</dbReference>
<dbReference type="STRING" id="83332.Rv3342"/>
<dbReference type="PaxDb" id="83332-Rv3342"/>
<dbReference type="DNASU" id="888046"/>
<dbReference type="GeneID" id="888046"/>
<dbReference type="KEGG" id="mtu:Rv3342"/>
<dbReference type="KEGG" id="mtv:RVBD_3342"/>
<dbReference type="TubercuList" id="Rv3342"/>
<dbReference type="eggNOG" id="COG2226">
    <property type="taxonomic scope" value="Bacteria"/>
</dbReference>
<dbReference type="InParanoid" id="P9WK01"/>
<dbReference type="OrthoDB" id="9797252at2"/>
<dbReference type="PhylomeDB" id="P9WK01"/>
<dbReference type="Proteomes" id="UP000001584">
    <property type="component" value="Chromosome"/>
</dbReference>
<dbReference type="GO" id="GO:0008168">
    <property type="term" value="F:methyltransferase activity"/>
    <property type="evidence" value="ECO:0000318"/>
    <property type="project" value="GO_Central"/>
</dbReference>
<dbReference type="GO" id="GO:0008757">
    <property type="term" value="F:S-adenosylmethionine-dependent methyltransferase activity"/>
    <property type="evidence" value="ECO:0007669"/>
    <property type="project" value="InterPro"/>
</dbReference>
<dbReference type="GO" id="GO:0032259">
    <property type="term" value="P:methylation"/>
    <property type="evidence" value="ECO:0007669"/>
    <property type="project" value="UniProtKB-KW"/>
</dbReference>
<dbReference type="CDD" id="cd02440">
    <property type="entry name" value="AdoMet_MTases"/>
    <property type="match status" value="1"/>
</dbReference>
<dbReference type="Gene3D" id="3.40.50.150">
    <property type="entry name" value="Vaccinia Virus protein VP39"/>
    <property type="match status" value="1"/>
</dbReference>
<dbReference type="InterPro" id="IPR051052">
    <property type="entry name" value="Diverse_substrate_MTase"/>
</dbReference>
<dbReference type="InterPro" id="IPR013216">
    <property type="entry name" value="Methyltransf_11"/>
</dbReference>
<dbReference type="InterPro" id="IPR029063">
    <property type="entry name" value="SAM-dependent_MTases_sf"/>
</dbReference>
<dbReference type="PANTHER" id="PTHR44942">
    <property type="entry name" value="METHYLTRANSF_11 DOMAIN-CONTAINING PROTEIN"/>
    <property type="match status" value="1"/>
</dbReference>
<dbReference type="PANTHER" id="PTHR44942:SF4">
    <property type="entry name" value="METHYLTRANSFERASE TYPE 11 DOMAIN-CONTAINING PROTEIN"/>
    <property type="match status" value="1"/>
</dbReference>
<dbReference type="Pfam" id="PF08241">
    <property type="entry name" value="Methyltransf_11"/>
    <property type="match status" value="1"/>
</dbReference>
<dbReference type="SUPFAM" id="SSF53335">
    <property type="entry name" value="S-adenosyl-L-methionine-dependent methyltransferases"/>
    <property type="match status" value="1"/>
</dbReference>
<accession>P9WK01</accession>
<accession>L0TC93</accession>
<accession>O53392</accession>
<accession>P65348</accession>
<sequence>MTCSRRDMSLSFGSAVGAYERGRPSYPPEAIDWLLPAAARRVLDLGAGTGKLTTRLVERGLDVVAVDPIPEMLDVLRAALPQTVALLGTAEEIPLDDNSVDAVLVAQAWHWVDPARAIPEVARVLRPGGRLGLVWNTRDERLGWVRELGEIIGRDGDPVRDRVTLPEPFTTVQRHQVEWTNYLTPQALIDLVASRSYCITSPAQVRTKTLDRVRQLLATHPALANSNGLALPYVTVCVRATLA</sequence>